<accession>A1REC6</accession>
<feature type="chain" id="PRO_1000052829" description="Large ribosomal subunit protein uL5">
    <location>
        <begin position="1"/>
        <end position="179"/>
    </location>
</feature>
<gene>
    <name evidence="1" type="primary">rplE</name>
    <name type="ordered locus">Sputw3181_0168</name>
</gene>
<organism>
    <name type="scientific">Shewanella sp. (strain W3-18-1)</name>
    <dbReference type="NCBI Taxonomy" id="351745"/>
    <lineage>
        <taxon>Bacteria</taxon>
        <taxon>Pseudomonadati</taxon>
        <taxon>Pseudomonadota</taxon>
        <taxon>Gammaproteobacteria</taxon>
        <taxon>Alteromonadales</taxon>
        <taxon>Shewanellaceae</taxon>
        <taxon>Shewanella</taxon>
    </lineage>
</organism>
<dbReference type="EMBL" id="CP000503">
    <property type="protein sequence ID" value="ABM23021.1"/>
    <property type="molecule type" value="Genomic_DNA"/>
</dbReference>
<dbReference type="RefSeq" id="WP_011787576.1">
    <property type="nucleotide sequence ID" value="NC_008750.1"/>
</dbReference>
<dbReference type="SMR" id="A1REC6"/>
<dbReference type="GeneID" id="67441772"/>
<dbReference type="KEGG" id="shw:Sputw3181_0168"/>
<dbReference type="HOGENOM" id="CLU_061015_2_1_6"/>
<dbReference type="Proteomes" id="UP000002597">
    <property type="component" value="Chromosome"/>
</dbReference>
<dbReference type="GO" id="GO:1990904">
    <property type="term" value="C:ribonucleoprotein complex"/>
    <property type="evidence" value="ECO:0007669"/>
    <property type="project" value="UniProtKB-KW"/>
</dbReference>
<dbReference type="GO" id="GO:0005840">
    <property type="term" value="C:ribosome"/>
    <property type="evidence" value="ECO:0007669"/>
    <property type="project" value="UniProtKB-KW"/>
</dbReference>
<dbReference type="GO" id="GO:0019843">
    <property type="term" value="F:rRNA binding"/>
    <property type="evidence" value="ECO:0007669"/>
    <property type="project" value="UniProtKB-UniRule"/>
</dbReference>
<dbReference type="GO" id="GO:0003735">
    <property type="term" value="F:structural constituent of ribosome"/>
    <property type="evidence" value="ECO:0007669"/>
    <property type="project" value="InterPro"/>
</dbReference>
<dbReference type="GO" id="GO:0000049">
    <property type="term" value="F:tRNA binding"/>
    <property type="evidence" value="ECO:0007669"/>
    <property type="project" value="UniProtKB-UniRule"/>
</dbReference>
<dbReference type="GO" id="GO:0006412">
    <property type="term" value="P:translation"/>
    <property type="evidence" value="ECO:0007669"/>
    <property type="project" value="UniProtKB-UniRule"/>
</dbReference>
<dbReference type="FunFam" id="3.30.1440.10:FF:000001">
    <property type="entry name" value="50S ribosomal protein L5"/>
    <property type="match status" value="1"/>
</dbReference>
<dbReference type="Gene3D" id="3.30.1440.10">
    <property type="match status" value="1"/>
</dbReference>
<dbReference type="HAMAP" id="MF_01333_B">
    <property type="entry name" value="Ribosomal_uL5_B"/>
    <property type="match status" value="1"/>
</dbReference>
<dbReference type="InterPro" id="IPR002132">
    <property type="entry name" value="Ribosomal_uL5"/>
</dbReference>
<dbReference type="InterPro" id="IPR020930">
    <property type="entry name" value="Ribosomal_uL5_bac-type"/>
</dbReference>
<dbReference type="InterPro" id="IPR031309">
    <property type="entry name" value="Ribosomal_uL5_C"/>
</dbReference>
<dbReference type="InterPro" id="IPR020929">
    <property type="entry name" value="Ribosomal_uL5_CS"/>
</dbReference>
<dbReference type="InterPro" id="IPR022803">
    <property type="entry name" value="Ribosomal_uL5_dom_sf"/>
</dbReference>
<dbReference type="InterPro" id="IPR031310">
    <property type="entry name" value="Ribosomal_uL5_N"/>
</dbReference>
<dbReference type="NCBIfam" id="NF000585">
    <property type="entry name" value="PRK00010.1"/>
    <property type="match status" value="1"/>
</dbReference>
<dbReference type="PANTHER" id="PTHR11994">
    <property type="entry name" value="60S RIBOSOMAL PROTEIN L11-RELATED"/>
    <property type="match status" value="1"/>
</dbReference>
<dbReference type="Pfam" id="PF00281">
    <property type="entry name" value="Ribosomal_L5"/>
    <property type="match status" value="1"/>
</dbReference>
<dbReference type="Pfam" id="PF00673">
    <property type="entry name" value="Ribosomal_L5_C"/>
    <property type="match status" value="1"/>
</dbReference>
<dbReference type="PIRSF" id="PIRSF002161">
    <property type="entry name" value="Ribosomal_L5"/>
    <property type="match status" value="1"/>
</dbReference>
<dbReference type="SUPFAM" id="SSF55282">
    <property type="entry name" value="RL5-like"/>
    <property type="match status" value="1"/>
</dbReference>
<dbReference type="PROSITE" id="PS00358">
    <property type="entry name" value="RIBOSOMAL_L5"/>
    <property type="match status" value="1"/>
</dbReference>
<sequence>MAKLHDKYQETVVAELAKKFGYTSVMQVPRIEKITLNMGVGEAVADKKVMEHALRDMTAIAGQKPVVTVARKSVAGFKIREGYPIGCKVTLRGERMWEFLERLVDIAIPRIRDFRGLSAKAFDGRGNYAMGVREQIIFPEIDYDKIDKIRGMDIVITTSAKTDEEGRALLDAFNFPFKK</sequence>
<protein>
    <recommendedName>
        <fullName evidence="1">Large ribosomal subunit protein uL5</fullName>
    </recommendedName>
    <alternativeName>
        <fullName evidence="2">50S ribosomal protein L5</fullName>
    </alternativeName>
</protein>
<name>RL5_SHESW</name>
<reference key="1">
    <citation type="submission" date="2006-12" db="EMBL/GenBank/DDBJ databases">
        <title>Complete sequence of Shewanella sp. W3-18-1.</title>
        <authorList>
            <consortium name="US DOE Joint Genome Institute"/>
            <person name="Copeland A."/>
            <person name="Lucas S."/>
            <person name="Lapidus A."/>
            <person name="Barry K."/>
            <person name="Detter J.C."/>
            <person name="Glavina del Rio T."/>
            <person name="Hammon N."/>
            <person name="Israni S."/>
            <person name="Dalin E."/>
            <person name="Tice H."/>
            <person name="Pitluck S."/>
            <person name="Chain P."/>
            <person name="Malfatti S."/>
            <person name="Shin M."/>
            <person name="Vergez L."/>
            <person name="Schmutz J."/>
            <person name="Larimer F."/>
            <person name="Land M."/>
            <person name="Hauser L."/>
            <person name="Kyrpides N."/>
            <person name="Lykidis A."/>
            <person name="Tiedje J."/>
            <person name="Richardson P."/>
        </authorList>
    </citation>
    <scope>NUCLEOTIDE SEQUENCE [LARGE SCALE GENOMIC DNA]</scope>
    <source>
        <strain>W3-18-1</strain>
    </source>
</reference>
<keyword id="KW-0687">Ribonucleoprotein</keyword>
<keyword id="KW-0689">Ribosomal protein</keyword>
<keyword id="KW-0694">RNA-binding</keyword>
<keyword id="KW-0699">rRNA-binding</keyword>
<keyword id="KW-0820">tRNA-binding</keyword>
<proteinExistence type="inferred from homology"/>
<comment type="function">
    <text evidence="1">This is one of the proteins that bind and probably mediate the attachment of the 5S RNA into the large ribosomal subunit, where it forms part of the central protuberance. In the 70S ribosome it contacts protein S13 of the 30S subunit (bridge B1b), connecting the 2 subunits; this bridge is implicated in subunit movement. Contacts the P site tRNA; the 5S rRNA and some of its associated proteins might help stabilize positioning of ribosome-bound tRNAs.</text>
</comment>
<comment type="subunit">
    <text evidence="1">Part of the 50S ribosomal subunit; part of the 5S rRNA/L5/L18/L25 subcomplex. Contacts the 5S rRNA and the P site tRNA. Forms a bridge to the 30S subunit in the 70S ribosome.</text>
</comment>
<comment type="similarity">
    <text evidence="1">Belongs to the universal ribosomal protein uL5 family.</text>
</comment>
<evidence type="ECO:0000255" key="1">
    <source>
        <dbReference type="HAMAP-Rule" id="MF_01333"/>
    </source>
</evidence>
<evidence type="ECO:0000305" key="2"/>